<accession>Q8TK55</accession>
<comment type="function">
    <text evidence="1">Catalyzes the transfer of the acetyl group from N(2)-acetylornithine to glutamate, forming N-acetylglutamate and L-ornithine.</text>
</comment>
<comment type="catalytic activity">
    <reaction evidence="1">
        <text>N(2)-acetyl-L-ornithine + L-glutamate = N-acetyl-L-glutamate + L-ornithine</text>
        <dbReference type="Rhea" id="RHEA:15349"/>
        <dbReference type="ChEBI" id="CHEBI:29985"/>
        <dbReference type="ChEBI" id="CHEBI:44337"/>
        <dbReference type="ChEBI" id="CHEBI:46911"/>
        <dbReference type="ChEBI" id="CHEBI:57805"/>
        <dbReference type="EC" id="2.3.1.35"/>
    </reaction>
</comment>
<comment type="pathway">
    <text evidence="1">Amino-acid biosynthesis; L-arginine biosynthesis; L-ornithine and N-acetyl-L-glutamate from L-glutamate and N(2)-acetyl-L-ornithine (cyclic): step 1/1.</text>
</comment>
<comment type="subunit">
    <text evidence="1">Heterotetramer of two alpha and two beta chains.</text>
</comment>
<comment type="subcellular location">
    <subcellularLocation>
        <location evidence="1">Cytoplasm</location>
    </subcellularLocation>
</comment>
<comment type="similarity">
    <text evidence="1">Belongs to the ArgJ family.</text>
</comment>
<feature type="chain" id="PRO_0000002271" description="Glutamate N-acetyltransferase alpha chain" evidence="1">
    <location>
        <begin position="1"/>
        <end position="179"/>
    </location>
</feature>
<feature type="chain" id="PRO_0000002272" description="Glutamate N-acetyltransferase beta chain" evidence="1">
    <location>
        <begin position="180"/>
        <end position="395"/>
    </location>
</feature>
<feature type="active site" description="Nucleophile" evidence="1">
    <location>
        <position position="180"/>
    </location>
</feature>
<feature type="binding site" evidence="1">
    <location>
        <position position="146"/>
    </location>
    <ligand>
        <name>substrate</name>
    </ligand>
</feature>
<feature type="binding site" evidence="1">
    <location>
        <position position="169"/>
    </location>
    <ligand>
        <name>substrate</name>
    </ligand>
</feature>
<feature type="binding site" evidence="1">
    <location>
        <position position="180"/>
    </location>
    <ligand>
        <name>substrate</name>
    </ligand>
</feature>
<feature type="binding site" evidence="1">
    <location>
        <position position="263"/>
    </location>
    <ligand>
        <name>substrate</name>
    </ligand>
</feature>
<feature type="binding site" evidence="1">
    <location>
        <position position="390"/>
    </location>
    <ligand>
        <name>substrate</name>
    </ligand>
</feature>
<feature type="binding site" evidence="1">
    <location>
        <position position="395"/>
    </location>
    <ligand>
        <name>substrate</name>
    </ligand>
</feature>
<feature type="site" description="Involved in the stabilization of negative charge on the oxyanion by the formation of the oxyanion hole" evidence="1">
    <location>
        <position position="107"/>
    </location>
</feature>
<feature type="site" description="Involved in the stabilization of negative charge on the oxyanion by the formation of the oxyanion hole" evidence="1">
    <location>
        <position position="108"/>
    </location>
</feature>
<feature type="site" description="Cleavage; by autolysis" evidence="1">
    <location>
        <begin position="179"/>
        <end position="180"/>
    </location>
</feature>
<reference key="1">
    <citation type="journal article" date="2002" name="Genome Res.">
        <title>The genome of Methanosarcina acetivorans reveals extensive metabolic and physiological diversity.</title>
        <authorList>
            <person name="Galagan J.E."/>
            <person name="Nusbaum C."/>
            <person name="Roy A."/>
            <person name="Endrizzi M.G."/>
            <person name="Macdonald P."/>
            <person name="FitzHugh W."/>
            <person name="Calvo S."/>
            <person name="Engels R."/>
            <person name="Smirnov S."/>
            <person name="Atnoor D."/>
            <person name="Brown A."/>
            <person name="Allen N."/>
            <person name="Naylor J."/>
            <person name="Stange-Thomann N."/>
            <person name="DeArellano K."/>
            <person name="Johnson R."/>
            <person name="Linton L."/>
            <person name="McEwan P."/>
            <person name="McKernan K."/>
            <person name="Talamas J."/>
            <person name="Tirrell A."/>
            <person name="Ye W."/>
            <person name="Zimmer A."/>
            <person name="Barber R.D."/>
            <person name="Cann I."/>
            <person name="Graham D.E."/>
            <person name="Grahame D.A."/>
            <person name="Guss A.M."/>
            <person name="Hedderich R."/>
            <person name="Ingram-Smith C."/>
            <person name="Kuettner H.C."/>
            <person name="Krzycki J.A."/>
            <person name="Leigh J.A."/>
            <person name="Li W."/>
            <person name="Liu J."/>
            <person name="Mukhopadhyay B."/>
            <person name="Reeve J.N."/>
            <person name="Smith K."/>
            <person name="Springer T.A."/>
            <person name="Umayam L.A."/>
            <person name="White O."/>
            <person name="White R.H."/>
            <person name="de Macario E.C."/>
            <person name="Ferry J.G."/>
            <person name="Jarrell K.F."/>
            <person name="Jing H."/>
            <person name="Macario A.J.L."/>
            <person name="Paulsen I.T."/>
            <person name="Pritchett M."/>
            <person name="Sowers K.R."/>
            <person name="Swanson R.V."/>
            <person name="Zinder S.H."/>
            <person name="Lander E."/>
            <person name="Metcalf W.W."/>
            <person name="Birren B."/>
        </authorList>
    </citation>
    <scope>NUCLEOTIDE SEQUENCE [LARGE SCALE GENOMIC DNA]</scope>
    <source>
        <strain>ATCC 35395 / DSM 2834 / JCM 12185 / C2A</strain>
    </source>
</reference>
<dbReference type="EC" id="2.3.1.35" evidence="1"/>
<dbReference type="EMBL" id="AE010299">
    <property type="protein sequence ID" value="AAM06925.1"/>
    <property type="molecule type" value="Genomic_DNA"/>
</dbReference>
<dbReference type="RefSeq" id="WP_011023478.1">
    <property type="nucleotide sequence ID" value="NC_003552.1"/>
</dbReference>
<dbReference type="SMR" id="Q8TK55"/>
<dbReference type="FunCoup" id="Q8TK55">
    <property type="interactions" value="176"/>
</dbReference>
<dbReference type="STRING" id="188937.MA_3564"/>
<dbReference type="MEROPS" id="T05.002"/>
<dbReference type="EnsemblBacteria" id="AAM06925">
    <property type="protein sequence ID" value="AAM06925"/>
    <property type="gene ID" value="MA_3564"/>
</dbReference>
<dbReference type="GeneID" id="1475457"/>
<dbReference type="KEGG" id="mac:MA_3564"/>
<dbReference type="HOGENOM" id="CLU_027172_1_0_2"/>
<dbReference type="InParanoid" id="Q8TK55"/>
<dbReference type="OrthoDB" id="52592at2157"/>
<dbReference type="PhylomeDB" id="Q8TK55"/>
<dbReference type="UniPathway" id="UPA00068">
    <property type="reaction ID" value="UER00111"/>
</dbReference>
<dbReference type="Proteomes" id="UP000002487">
    <property type="component" value="Chromosome"/>
</dbReference>
<dbReference type="GO" id="GO:0005737">
    <property type="term" value="C:cytoplasm"/>
    <property type="evidence" value="ECO:0007669"/>
    <property type="project" value="UniProtKB-SubCell"/>
</dbReference>
<dbReference type="GO" id="GO:0004358">
    <property type="term" value="F:glutamate N-acetyltransferase activity"/>
    <property type="evidence" value="ECO:0007669"/>
    <property type="project" value="UniProtKB-UniRule"/>
</dbReference>
<dbReference type="GO" id="GO:0004042">
    <property type="term" value="F:L-glutamate N-acetyltransferase activity"/>
    <property type="evidence" value="ECO:0000318"/>
    <property type="project" value="GO_Central"/>
</dbReference>
<dbReference type="GO" id="GO:0006526">
    <property type="term" value="P:L-arginine biosynthetic process"/>
    <property type="evidence" value="ECO:0007669"/>
    <property type="project" value="UniProtKB-UniRule"/>
</dbReference>
<dbReference type="GO" id="GO:0006592">
    <property type="term" value="P:ornithine biosynthetic process"/>
    <property type="evidence" value="ECO:0000318"/>
    <property type="project" value="GO_Central"/>
</dbReference>
<dbReference type="CDD" id="cd02152">
    <property type="entry name" value="OAT"/>
    <property type="match status" value="1"/>
</dbReference>
<dbReference type="FunFam" id="3.10.20.340:FF:000001">
    <property type="entry name" value="Arginine biosynthesis bifunctional protein ArgJ, chloroplastic"/>
    <property type="match status" value="1"/>
</dbReference>
<dbReference type="FunFam" id="3.60.70.12:FF:000001">
    <property type="entry name" value="Arginine biosynthesis bifunctional protein ArgJ, chloroplastic"/>
    <property type="match status" value="1"/>
</dbReference>
<dbReference type="Gene3D" id="3.10.20.340">
    <property type="entry name" value="ArgJ beta chain, C-terminal domain"/>
    <property type="match status" value="1"/>
</dbReference>
<dbReference type="Gene3D" id="3.60.70.12">
    <property type="entry name" value="L-amino peptidase D-ALA esterase/amidase"/>
    <property type="match status" value="1"/>
</dbReference>
<dbReference type="HAMAP" id="MF_01106">
    <property type="entry name" value="ArgJ"/>
    <property type="match status" value="1"/>
</dbReference>
<dbReference type="InterPro" id="IPR002813">
    <property type="entry name" value="Arg_biosynth_ArgJ"/>
</dbReference>
<dbReference type="InterPro" id="IPR016117">
    <property type="entry name" value="ArgJ-like_dom_sf"/>
</dbReference>
<dbReference type="InterPro" id="IPR042195">
    <property type="entry name" value="ArgJ_beta_C"/>
</dbReference>
<dbReference type="NCBIfam" id="TIGR00120">
    <property type="entry name" value="ArgJ"/>
    <property type="match status" value="1"/>
</dbReference>
<dbReference type="NCBIfam" id="NF003802">
    <property type="entry name" value="PRK05388.1"/>
    <property type="match status" value="1"/>
</dbReference>
<dbReference type="PANTHER" id="PTHR23100">
    <property type="entry name" value="ARGININE BIOSYNTHESIS BIFUNCTIONAL PROTEIN ARGJ"/>
    <property type="match status" value="1"/>
</dbReference>
<dbReference type="PANTHER" id="PTHR23100:SF0">
    <property type="entry name" value="ARGININE BIOSYNTHESIS BIFUNCTIONAL PROTEIN ARGJ, MITOCHONDRIAL"/>
    <property type="match status" value="1"/>
</dbReference>
<dbReference type="Pfam" id="PF01960">
    <property type="entry name" value="ArgJ"/>
    <property type="match status" value="1"/>
</dbReference>
<dbReference type="SUPFAM" id="SSF56266">
    <property type="entry name" value="DmpA/ArgJ-like"/>
    <property type="match status" value="1"/>
</dbReference>
<organism>
    <name type="scientific">Methanosarcina acetivorans (strain ATCC 35395 / DSM 2834 / JCM 12185 / C2A)</name>
    <dbReference type="NCBI Taxonomy" id="188937"/>
    <lineage>
        <taxon>Archaea</taxon>
        <taxon>Methanobacteriati</taxon>
        <taxon>Methanobacteriota</taxon>
        <taxon>Stenosarchaea group</taxon>
        <taxon>Methanomicrobia</taxon>
        <taxon>Methanosarcinales</taxon>
        <taxon>Methanosarcinaceae</taxon>
        <taxon>Methanosarcina</taxon>
    </lineage>
</organism>
<evidence type="ECO:0000255" key="1">
    <source>
        <dbReference type="HAMAP-Rule" id="MF_01106"/>
    </source>
</evidence>
<name>ARGJ_METAC</name>
<keyword id="KW-0012">Acyltransferase</keyword>
<keyword id="KW-0028">Amino-acid biosynthesis</keyword>
<keyword id="KW-0055">Arginine biosynthesis</keyword>
<keyword id="KW-0068">Autocatalytic cleavage</keyword>
<keyword id="KW-0963">Cytoplasm</keyword>
<keyword id="KW-1185">Reference proteome</keyword>
<keyword id="KW-0808">Transferase</keyword>
<protein>
    <recommendedName>
        <fullName evidence="1">Glutamate N-acetyltransferase</fullName>
        <ecNumber evidence="1">2.3.1.35</ecNumber>
    </recommendedName>
    <alternativeName>
        <fullName evidence="1">Ornithine acetyltransferase</fullName>
        <shortName evidence="1">OATase</shortName>
    </alternativeName>
    <alternativeName>
        <fullName evidence="1">Ornithine transacetylase</fullName>
    </alternativeName>
    <component>
        <recommendedName>
            <fullName evidence="1">Glutamate N-acetyltransferase alpha chain</fullName>
        </recommendedName>
    </component>
    <component>
        <recommendedName>
            <fullName evidence="1">Glutamate N-acetyltransferase beta chain</fullName>
        </recommendedName>
    </component>
</protein>
<gene>
    <name evidence="1" type="primary">argJ</name>
    <name type="ordered locus">MA_3564</name>
</gene>
<proteinExistence type="inferred from homology"/>
<sequence length="395" mass="41700">MKKIEGGICAVKGVTANGIKLGKMGITVIRAEGPAAGVFTKNKVTAAPVVLSKGVIETQHQLSAIIANSGNANAFTGDDGFLDAMEMASALSESLDLEPDTVAVASTGVIGRRLDVSWIREHLPEVLEGLGSSPECSLAAAKAIMTTDKALKEVAVELDCGVRIGAIAKGSGMIEPNMGTMLCFAYTDALVPADVLDAALRIAVDKTFNMVVVDGDTSTNDMVLFTSTCKSGIKPCMECLDEFEDALIYLFTDLAKKMARDGEGATKLIEARVTGAKTYEDARLAVKAIVRSPLVKSAIFGKDPNWGRVVAAAGYSGAELEQERLSLSFSAGGETVELVKSGEISRVSDLALLNKIMANEEIIITLDFGMGKESATAWGCDLTYDYVRINAEYTT</sequence>